<keyword id="KW-0167">Capsid protein</keyword>
<keyword id="KW-1185">Reference proteome</keyword>
<keyword id="KW-1142">T=3 icosahedral capsid protein</keyword>
<keyword id="KW-0946">Virion</keyword>
<gene>
    <name type="ORF">ORF3</name>
</gene>
<reference key="1">
    <citation type="journal article" date="2005" name="Virology">
        <title>Poinsettia latent virus is not a cryptic virus, but a natural polerovirus-sobemovirus hybrid.</title>
        <authorList>
            <person name="Aus dem Siepen M."/>
            <person name="Pohl J.O."/>
            <person name="Koo B.J."/>
            <person name="Wege C."/>
            <person name="Jeske H."/>
        </authorList>
    </citation>
    <scope>NUCLEOTIDE SEQUENCE [GENOMIC RNA]</scope>
</reference>
<sequence length="305" mass="33013">MAKKGVNKQARTNSKLDQLVTSLERLTVGSMQRKSNRQRPKSRKTSGRVVTAPVSSAALIRYKAPSLNGNSMDSVRLASKSLVIEAVKVGIEYQVSVVPLVPCIQHTWLSGVACYWSKYRWRSCRLVYIPYCSSSFTGYVSMGLSYDYADAIPSDETEMSALKGYTTTSAWAGSEGIKMLSYPTGAVPSGAVVLSLDCASMSKPWYPYISAVAATNLGEKQPELLNQYTPARAFIGTGGGMQGVNGLTAGRVFMVYDIELIEPVSPAMQENLSSTGRSKIDQSISPLTGADFEIVRKVSAISQIQ</sequence>
<dbReference type="EMBL" id="AJ867490">
    <property type="protein sequence ID" value="CAI34772.1"/>
    <property type="molecule type" value="Genomic_RNA"/>
</dbReference>
<dbReference type="SMR" id="Q5NDM8"/>
<dbReference type="KEGG" id="vg:7040109"/>
<dbReference type="Proteomes" id="UP000001670">
    <property type="component" value="Segment"/>
</dbReference>
<dbReference type="GO" id="GO:0039617">
    <property type="term" value="C:T=3 icosahedral viral capsid"/>
    <property type="evidence" value="ECO:0007669"/>
    <property type="project" value="UniProtKB-KW"/>
</dbReference>
<dbReference type="GO" id="GO:0005198">
    <property type="term" value="F:structural molecule activity"/>
    <property type="evidence" value="ECO:0007669"/>
    <property type="project" value="InterPro"/>
</dbReference>
<dbReference type="Gene3D" id="2.60.120.20">
    <property type="match status" value="1"/>
</dbReference>
<dbReference type="InterPro" id="IPR000937">
    <property type="entry name" value="Capsid_prot_S-dom_vir"/>
</dbReference>
<dbReference type="InterPro" id="IPR029053">
    <property type="entry name" value="Viral_coat"/>
</dbReference>
<dbReference type="Pfam" id="PF00729">
    <property type="entry name" value="Viral_coat"/>
    <property type="match status" value="1"/>
</dbReference>
<dbReference type="PRINTS" id="PR00233">
    <property type="entry name" value="ICOSAHEDRAL"/>
</dbReference>
<dbReference type="SUPFAM" id="SSF88633">
    <property type="entry name" value="Positive stranded ssRNA viruses"/>
    <property type="match status" value="1"/>
</dbReference>
<comment type="function">
    <text evidence="2">Capsid protein self-assembles to form an icosahedral capsid about 34 nm in diameter. The capsid encapsulates the genomic RNA (Potential).</text>
</comment>
<comment type="subcellular location">
    <subcellularLocation>
        <location evidence="2">Virion</location>
    </subcellularLocation>
</comment>
<comment type="similarity">
    <text evidence="2">Belongs to the icosahedral plant coat protein family.</text>
</comment>
<proteinExistence type="inferred from homology"/>
<organism>
    <name type="scientific">Poinsettia latent virus (isolate Euphorbia pulcherrima/Germany/Siepen/2005)</name>
    <name type="common">PnLV</name>
    <name type="synonym">Poinsettia cryptic virus</name>
    <dbReference type="NCBI Taxonomy" id="686943"/>
    <lineage>
        <taxon>Viruses</taxon>
        <taxon>Riboviria</taxon>
        <taxon>Orthornavirae</taxon>
        <taxon>Pisuviricota</taxon>
        <taxon>Pisoniviricetes</taxon>
        <taxon>Sobelivirales</taxon>
        <taxon>Solemoviridae</taxon>
        <taxon>Polemovirus</taxon>
        <taxon>Poinsettia latent virus</taxon>
    </lineage>
</organism>
<name>CAPSD_PNLV</name>
<accession>Q5NDM8</accession>
<feature type="chain" id="PRO_0000402483" description="Capsid protein">
    <location>
        <begin position="1"/>
        <end position="305"/>
    </location>
</feature>
<feature type="region of interest" description="Disordered" evidence="1">
    <location>
        <begin position="30"/>
        <end position="49"/>
    </location>
</feature>
<feature type="compositionally biased region" description="Basic residues" evidence="1">
    <location>
        <begin position="34"/>
        <end position="46"/>
    </location>
</feature>
<evidence type="ECO:0000256" key="1">
    <source>
        <dbReference type="SAM" id="MobiDB-lite"/>
    </source>
</evidence>
<evidence type="ECO:0000305" key="2"/>
<organismHost>
    <name type="scientific">Euphorbia pulcherrima</name>
    <name type="common">Poinsettia</name>
    <name type="synonym">Poinsettia pulcherrima</name>
    <dbReference type="NCBI Taxonomy" id="37495"/>
</organismHost>
<protein>
    <recommendedName>
        <fullName>Capsid protein</fullName>
        <shortName>CP</shortName>
    </recommendedName>
    <alternativeName>
        <fullName>Coat protein</fullName>
    </alternativeName>
</protein>